<evidence type="ECO:0000255" key="1">
    <source>
        <dbReference type="PROSITE-ProRule" id="PRU00805"/>
    </source>
</evidence>
<evidence type="ECO:0000269" key="2">
    <source>
    </source>
</evidence>
<evidence type="ECO:0000305" key="3"/>
<evidence type="ECO:0007829" key="4">
    <source>
        <dbReference type="PDB" id="5LUN"/>
    </source>
</evidence>
<evidence type="ECO:0007829" key="5">
    <source>
        <dbReference type="PDB" id="5V2T"/>
    </source>
</evidence>
<evidence type="ECO:0007829" key="6">
    <source>
        <dbReference type="PDB" id="5V2V"/>
    </source>
</evidence>
<evidence type="ECO:0007829" key="7">
    <source>
        <dbReference type="PDB" id="5VKB"/>
    </source>
</evidence>
<evidence type="ECO:0007829" key="8">
    <source>
        <dbReference type="PDB" id="6CF3"/>
    </source>
</evidence>
<evidence type="ECO:0007829" key="9">
    <source>
        <dbReference type="PDB" id="6VP4"/>
    </source>
</evidence>
<gene>
    <name type="primary">efe</name>
</gene>
<accession>P32021</accession>
<comment type="function">
    <text evidence="2">Simultaneously catalyzes two reactions, namely formation of ethylene and of succinate from 2-oxoglutarate, with a molar ratio of 2:1.</text>
</comment>
<comment type="catalytic activity">
    <reaction>
        <text>2-oxoglutarate + O2 + 2 H(+) = ethene + 3 CO2 + H2O</text>
        <dbReference type="Rhea" id="RHEA:31523"/>
        <dbReference type="ChEBI" id="CHEBI:15377"/>
        <dbReference type="ChEBI" id="CHEBI:15378"/>
        <dbReference type="ChEBI" id="CHEBI:15379"/>
        <dbReference type="ChEBI" id="CHEBI:16526"/>
        <dbReference type="ChEBI" id="CHEBI:16810"/>
        <dbReference type="ChEBI" id="CHEBI:18153"/>
        <dbReference type="EC" id="1.13.12.19"/>
    </reaction>
</comment>
<comment type="catalytic activity">
    <reaction>
        <text>L-arginine + 2-oxoglutarate + O2 = guanidine + L-glutamate 5-semialdehyde + succinate + CO2</text>
        <dbReference type="Rhea" id="RHEA:31535"/>
        <dbReference type="ChEBI" id="CHEBI:15379"/>
        <dbReference type="ChEBI" id="CHEBI:16526"/>
        <dbReference type="ChEBI" id="CHEBI:16810"/>
        <dbReference type="ChEBI" id="CHEBI:30031"/>
        <dbReference type="ChEBI" id="CHEBI:30087"/>
        <dbReference type="ChEBI" id="CHEBI:32682"/>
        <dbReference type="ChEBI" id="CHEBI:58066"/>
        <dbReference type="EC" id="1.14.20.7"/>
    </reaction>
</comment>
<comment type="cofactor">
    <cofactor>
        <name>Fe(2+)</name>
        <dbReference type="ChEBI" id="CHEBI:29033"/>
    </cofactor>
</comment>
<comment type="activity regulation">
    <text>Activated by catalase. Inhibited by chelating reagents such as EDTA and Tiron (4,5-dihydroxy-1,3-benzene disulphonic acid), and by DTNB (5,5'-dithio-bis-2-nitrobenzoate) and hydrogen peroxide.</text>
</comment>
<comment type="biophysicochemical properties">
    <kinetics>
        <KM>59 uM for Fe(2+)</KM>
        <KM>19 uM for 2-oxoglutarate</KM>
        <KM>18 uM for L-arginine</KM>
    </kinetics>
    <phDependence>
        <text>Optimum pH is 7.0-7.5.</text>
    </phDependence>
    <temperatureDependence>
        <text>Optimum temperature is 20-25 degrees Celsius.</text>
    </temperatureDependence>
</comment>
<comment type="pathway">
    <text>Alkene biosynthesis; ethylene biosynthesis via 2-oxoglutarate.</text>
</comment>
<comment type="subunit">
    <text>Monomer.</text>
</comment>
<comment type="miscellaneous">
    <text>A dual-circuit mechanism has been proposed in PubMed:1445291 for the complete reaction, in which the binding of L-arginine and 2-oxoglutarate in a Schiff-base structure generates a common intermediate for the two reactions.</text>
</comment>
<comment type="similarity">
    <text evidence="3">Belongs to the iron/ascorbate-dependent oxidoreductase family.</text>
</comment>
<organism>
    <name type="scientific">Pseudomonas savastanoi pv. phaseolicola</name>
    <name type="common">Pseudomonas syringae pv. phaseolicola</name>
    <dbReference type="NCBI Taxonomy" id="319"/>
    <lineage>
        <taxon>Bacteria</taxon>
        <taxon>Pseudomonadati</taxon>
        <taxon>Pseudomonadota</taxon>
        <taxon>Gammaproteobacteria</taxon>
        <taxon>Pseudomonadales</taxon>
        <taxon>Pseudomonadaceae</taxon>
        <taxon>Pseudomonas</taxon>
    </lineage>
</organism>
<keyword id="KW-0002">3D-structure</keyword>
<keyword id="KW-0223">Dioxygenase</keyword>
<keyword id="KW-0903">Direct protein sequencing</keyword>
<keyword id="KW-0266">Ethylene biosynthesis</keyword>
<keyword id="KW-0408">Iron</keyword>
<keyword id="KW-0479">Metal-binding</keyword>
<keyword id="KW-0560">Oxidoreductase</keyword>
<keyword id="KW-0614">Plasmid</keyword>
<feature type="chain" id="PRO_0000067277" description="2-oxoglutarate-dependent ethylene/succinate-forming enzyme">
    <location>
        <begin position="1"/>
        <end position="350"/>
    </location>
</feature>
<feature type="domain" description="Fe2OG dioxygenase" evidence="1">
    <location>
        <begin position="166"/>
        <end position="286"/>
    </location>
</feature>
<feature type="binding site" evidence="1">
    <location>
        <position position="189"/>
    </location>
    <ligand>
        <name>Fe cation</name>
        <dbReference type="ChEBI" id="CHEBI:24875"/>
    </ligand>
</feature>
<feature type="binding site" evidence="1">
    <location>
        <position position="268"/>
    </location>
    <ligand>
        <name>Fe cation</name>
        <dbReference type="ChEBI" id="CHEBI:24875"/>
    </ligand>
</feature>
<feature type="sequence conflict" description="In Ref. 2; AA sequence." evidence="3" ref="2">
    <original>W</original>
    <variation>K</variation>
    <location>
        <position position="30"/>
    </location>
</feature>
<feature type="helix" evidence="4">
    <location>
        <begin position="17"/>
        <end position="33"/>
    </location>
</feature>
<feature type="strand" evidence="4">
    <location>
        <begin position="36"/>
        <end position="39"/>
    </location>
</feature>
<feature type="helix" evidence="4">
    <location>
        <begin position="42"/>
        <end position="59"/>
    </location>
</feature>
<feature type="helix" evidence="4">
    <location>
        <begin position="63"/>
        <end position="67"/>
    </location>
</feature>
<feature type="strand" evidence="4">
    <location>
        <begin position="77"/>
        <end position="79"/>
    </location>
</feature>
<feature type="turn" evidence="4">
    <location>
        <begin position="81"/>
        <end position="83"/>
    </location>
</feature>
<feature type="strand" evidence="7">
    <location>
        <begin position="84"/>
        <end position="86"/>
    </location>
</feature>
<feature type="strand" evidence="4">
    <location>
        <begin position="94"/>
        <end position="98"/>
    </location>
</feature>
<feature type="helix" evidence="4">
    <location>
        <begin position="107"/>
        <end position="110"/>
    </location>
</feature>
<feature type="helix" evidence="4">
    <location>
        <begin position="124"/>
        <end position="151"/>
    </location>
</feature>
<feature type="turn" evidence="4">
    <location>
        <begin position="156"/>
        <end position="159"/>
    </location>
</feature>
<feature type="helix" evidence="4">
    <location>
        <begin position="160"/>
        <end position="162"/>
    </location>
</feature>
<feature type="strand" evidence="4">
    <location>
        <begin position="169"/>
        <end position="175"/>
    </location>
</feature>
<feature type="helix" evidence="8">
    <location>
        <begin position="178"/>
        <end position="180"/>
    </location>
</feature>
<feature type="strand" evidence="4">
    <location>
        <begin position="184"/>
        <end position="189"/>
    </location>
</feature>
<feature type="strand" evidence="4">
    <location>
        <begin position="193"/>
        <end position="200"/>
    </location>
</feature>
<feature type="strand" evidence="4">
    <location>
        <begin position="206"/>
        <end position="208"/>
    </location>
</feature>
<feature type="helix" evidence="4">
    <location>
        <begin position="223"/>
        <end position="225"/>
    </location>
</feature>
<feature type="turn" evidence="4">
    <location>
        <begin position="228"/>
        <end position="233"/>
    </location>
</feature>
<feature type="strand" evidence="6">
    <location>
        <begin position="238"/>
        <end position="240"/>
    </location>
</feature>
<feature type="strand" evidence="4">
    <location>
        <begin position="246"/>
        <end position="251"/>
    </location>
</feature>
<feature type="helix" evidence="4">
    <location>
        <begin position="253"/>
        <end position="258"/>
    </location>
</feature>
<feature type="turn" evidence="4">
    <location>
        <begin position="259"/>
        <end position="261"/>
    </location>
</feature>
<feature type="strand" evidence="4">
    <location>
        <begin position="268"/>
        <end position="271"/>
    </location>
</feature>
<feature type="strand" evidence="4">
    <location>
        <begin position="277"/>
        <end position="284"/>
    </location>
</feature>
<feature type="strand" evidence="9">
    <location>
        <begin position="295"/>
        <end position="297"/>
    </location>
</feature>
<feature type="helix" evidence="4">
    <location>
        <begin position="306"/>
        <end position="317"/>
    </location>
</feature>
<feature type="helix" evidence="4">
    <location>
        <begin position="322"/>
        <end position="329"/>
    </location>
</feature>
<feature type="turn" evidence="4">
    <location>
        <begin position="330"/>
        <end position="333"/>
    </location>
</feature>
<feature type="helix" evidence="4">
    <location>
        <begin position="334"/>
        <end position="339"/>
    </location>
</feature>
<feature type="strand" evidence="5">
    <location>
        <begin position="341"/>
        <end position="343"/>
    </location>
</feature>
<proteinExistence type="evidence at protein level"/>
<sequence>MTNLQTFELPTEVTGCAADISLGRALIQAWQKDGIFQIKTDSEQDRKTQEAMAASKQFCKEPLTFKSSCVSDLTYSGYVASGEEVTAGKPDFPEIFTVCKDLSVGDQRVKAGWPCHGPVPWPNNTYQKSMKTFMEELGLAGERLLKLTALGFELPINTFTDLTRDGWHHMRVLRFPPQTSTLSRGIGAHTDYGLLVIAAQDDVGGLYIRPPVEGEKRNRNWLPGESSAGMFEHDEPWTFVTPTPGVWTVFPGDILQFMTGGQLLSTPHKVKLNTRERFACAYFHEPNFEASAYPLFEPSANERIHYGEHFTNMFMRCYPDRITTQRINKENRLAHLEDLKKYSDTRATGS</sequence>
<reference key="1">
    <citation type="journal article" date="1992" name="Biochem. Biophys. Res. Commun.">
        <title>Molecular cloning in Escherichia coli, expression, and nucleotide sequence of the gene for the ethylene-forming enzyme of Pseudomonas syringae pv. phaseolicola PK2.</title>
        <authorList>
            <person name="Fukuda H."/>
            <person name="Ogawa T."/>
            <person name="Ishihara K."/>
            <person name="Fujii T."/>
            <person name="Nagahama K."/>
            <person name="Omata T."/>
            <person name="Inoue Y."/>
            <person name="Tanase S."/>
            <person name="Morino Y."/>
        </authorList>
    </citation>
    <scope>NUCLEOTIDE SEQUENCE [GENOMIC DNA]</scope>
    <source>
        <strain>PK2</strain>
    </source>
</reference>
<reference key="2">
    <citation type="journal article" date="1991" name="J. Gen. Microbiol.">
        <title>Purification and properties of an ethylene-forming enzyme from Pseudomonas syringae pv. phaseolicola PK2.</title>
        <authorList>
            <person name="Nagahama K."/>
            <person name="Ogawa T."/>
            <person name="Fujii T."/>
            <person name="Tazaki M."/>
            <person name="Tanase S."/>
            <person name="Morino Y."/>
            <person name="Fukuda H."/>
        </authorList>
    </citation>
    <scope>PROTEIN SEQUENCE OF 1-30</scope>
    <scope>CHARACTERIZATION</scope>
    <source>
        <strain>PK2</strain>
    </source>
</reference>
<reference key="3">
    <citation type="journal article" date="1992" name="Biochem. Biophys. Res. Commun.">
        <title>Two reactions are simultaneously catalyzed by a single enzyme: the arginine-dependent simultaneous formation of two products, ethylene and succinate, from 2-oxoglutarate by an enzyme from Pseudomonas syringae.</title>
        <authorList>
            <person name="Fukuda H."/>
            <person name="Ogawa T."/>
            <person name="Tazaki M."/>
            <person name="Nagahama K."/>
            <person name="Fujii T."/>
            <person name="Tanase S."/>
            <person name="Morino Y."/>
        </authorList>
    </citation>
    <scope>FUNCTION</scope>
    <scope>MECHANISM</scope>
    <source>
        <strain>PK2</strain>
    </source>
</reference>
<geneLocation type="plasmid">
    <name>pPSP1</name>
</geneLocation>
<name>EFE_PSESH</name>
<protein>
    <recommendedName>
        <fullName>2-oxoglutarate-dependent ethylene/succinate-forming enzyme</fullName>
        <shortName>EFE</shortName>
        <shortName>Ethylene-forming enzyme</shortName>
        <ecNumber>1.13.12.19</ecNumber>
        <ecNumber>1.14.20.7</ecNumber>
    </recommendedName>
    <alternativeName>
        <fullName>2-oxoglutarate dioxygenase (ethylene-forming)</fullName>
    </alternativeName>
    <alternativeName>
        <fullName>2-oxoglutarate/L-arginine monooxygenase/decarboxylase (succinate-forming)</fullName>
    </alternativeName>
</protein>
<dbReference type="EC" id="1.13.12.19"/>
<dbReference type="EC" id="1.14.20.7"/>
<dbReference type="EMBL" id="D13182">
    <property type="protein sequence ID" value="BAA02477.1"/>
    <property type="molecule type" value="Genomic_DNA"/>
</dbReference>
<dbReference type="PIR" id="JQ1656">
    <property type="entry name" value="JQ1656"/>
</dbReference>
<dbReference type="RefSeq" id="WP_054082735.1">
    <property type="nucleotide sequence ID" value="NZ_LGKV01000002.1"/>
</dbReference>
<dbReference type="PDB" id="5LSQ">
    <property type="method" value="X-ray"/>
    <property type="resolution" value="1.55 A"/>
    <property type="chains" value="A=3-350"/>
</dbReference>
<dbReference type="PDB" id="5LUN">
    <property type="method" value="X-ray"/>
    <property type="resolution" value="1.08 A"/>
    <property type="chains" value="A/B/C/D=2-350"/>
</dbReference>
<dbReference type="PDB" id="5MOF">
    <property type="method" value="X-ray"/>
    <property type="resolution" value="1.45 A"/>
    <property type="chains" value="A=3-350"/>
</dbReference>
<dbReference type="PDB" id="5V2T">
    <property type="method" value="X-ray"/>
    <property type="resolution" value="1.23 A"/>
    <property type="chains" value="A=1-350"/>
</dbReference>
<dbReference type="PDB" id="5V2U">
    <property type="method" value="X-ray"/>
    <property type="resolution" value="2.06 A"/>
    <property type="chains" value="A=1-350"/>
</dbReference>
<dbReference type="PDB" id="5V2V">
    <property type="method" value="X-ray"/>
    <property type="resolution" value="3.04 A"/>
    <property type="chains" value="A=1-350"/>
</dbReference>
<dbReference type="PDB" id="5V2X">
    <property type="method" value="X-ray"/>
    <property type="resolution" value="1.85 A"/>
    <property type="chains" value="A/B=1-350"/>
</dbReference>
<dbReference type="PDB" id="5V2Y">
    <property type="method" value="X-ray"/>
    <property type="resolution" value="1.43 A"/>
    <property type="chains" value="A=1-350"/>
</dbReference>
<dbReference type="PDB" id="5V2Z">
    <property type="method" value="X-ray"/>
    <property type="resolution" value="1.23 A"/>
    <property type="chains" value="A=1-350"/>
</dbReference>
<dbReference type="PDB" id="5V31">
    <property type="method" value="X-ray"/>
    <property type="resolution" value="2.45 A"/>
    <property type="chains" value="A=1-350"/>
</dbReference>
<dbReference type="PDB" id="5V32">
    <property type="method" value="X-ray"/>
    <property type="resolution" value="1.49 A"/>
    <property type="chains" value="A=1-350"/>
</dbReference>
<dbReference type="PDB" id="5V34">
    <property type="method" value="X-ray"/>
    <property type="resolution" value="1.48 A"/>
    <property type="chains" value="A=1-350"/>
</dbReference>
<dbReference type="PDB" id="5VKA">
    <property type="method" value="X-ray"/>
    <property type="resolution" value="1.17 A"/>
    <property type="chains" value="A=1-350"/>
</dbReference>
<dbReference type="PDB" id="5VKB">
    <property type="method" value="X-ray"/>
    <property type="resolution" value="1.14 A"/>
    <property type="chains" value="A=1-350"/>
</dbReference>
<dbReference type="PDB" id="6CBA">
    <property type="method" value="X-ray"/>
    <property type="resolution" value="1.13 A"/>
    <property type="chains" value="A=1-350"/>
</dbReference>
<dbReference type="PDB" id="6CF3">
    <property type="method" value="X-ray"/>
    <property type="resolution" value="1.12 A"/>
    <property type="chains" value="A=1-350"/>
</dbReference>
<dbReference type="PDB" id="6VP4">
    <property type="method" value="X-ray"/>
    <property type="resolution" value="1.83 A"/>
    <property type="chains" value="A/B/C/D=1-350"/>
</dbReference>
<dbReference type="PDB" id="6VP5">
    <property type="method" value="X-ray"/>
    <property type="resolution" value="1.97 A"/>
    <property type="chains" value="A/B/C/D=1-350"/>
</dbReference>
<dbReference type="PDB" id="8UC2">
    <property type="method" value="X-ray"/>
    <property type="resolution" value="1.60 A"/>
    <property type="chains" value="A=1-350"/>
</dbReference>
<dbReference type="PDBsum" id="5LSQ"/>
<dbReference type="PDBsum" id="5LUN"/>
<dbReference type="PDBsum" id="5MOF"/>
<dbReference type="PDBsum" id="5V2T"/>
<dbReference type="PDBsum" id="5V2U"/>
<dbReference type="PDBsum" id="5V2V"/>
<dbReference type="PDBsum" id="5V2X"/>
<dbReference type="PDBsum" id="5V2Y"/>
<dbReference type="PDBsum" id="5V2Z"/>
<dbReference type="PDBsum" id="5V31"/>
<dbReference type="PDBsum" id="5V32"/>
<dbReference type="PDBsum" id="5V34"/>
<dbReference type="PDBsum" id="5VKA"/>
<dbReference type="PDBsum" id="5VKB"/>
<dbReference type="PDBsum" id="6CBA"/>
<dbReference type="PDBsum" id="6CF3"/>
<dbReference type="PDBsum" id="6VP4"/>
<dbReference type="PDBsum" id="6VP5"/>
<dbReference type="PDBsum" id="8UC2"/>
<dbReference type="SMR" id="P32021"/>
<dbReference type="KEGG" id="ag:BAA02477"/>
<dbReference type="BioCyc" id="MetaCyc:MONOMER-16773"/>
<dbReference type="BRENDA" id="1.13.12.19">
    <property type="organism ID" value="5194"/>
</dbReference>
<dbReference type="BRENDA" id="1.14.20.7">
    <property type="organism ID" value="5194"/>
</dbReference>
<dbReference type="SABIO-RK" id="P32021"/>
<dbReference type="UniPathway" id="UPA00385"/>
<dbReference type="GO" id="GO:0102276">
    <property type="term" value="F:2-oxoglutarate oxygenase/decarboxylase (ethylene-forming) activity"/>
    <property type="evidence" value="ECO:0007669"/>
    <property type="project" value="UniProtKB-EC"/>
</dbReference>
<dbReference type="GO" id="GO:0051213">
    <property type="term" value="F:dioxygenase activity"/>
    <property type="evidence" value="ECO:0007669"/>
    <property type="project" value="UniProtKB-KW"/>
</dbReference>
<dbReference type="GO" id="GO:0046872">
    <property type="term" value="F:metal ion binding"/>
    <property type="evidence" value="ECO:0007669"/>
    <property type="project" value="UniProtKB-KW"/>
</dbReference>
<dbReference type="GO" id="GO:0009693">
    <property type="term" value="P:ethylene biosynthetic process"/>
    <property type="evidence" value="ECO:0007669"/>
    <property type="project" value="UniProtKB-UniPathway"/>
</dbReference>
<dbReference type="Gene3D" id="2.60.120.330">
    <property type="entry name" value="B-lactam Antibiotic, Isopenicillin N Synthase, Chain"/>
    <property type="match status" value="1"/>
</dbReference>
<dbReference type="InterPro" id="IPR026992">
    <property type="entry name" value="DIOX_N"/>
</dbReference>
<dbReference type="InterPro" id="IPR044861">
    <property type="entry name" value="IPNS-like_FE2OG_OXY"/>
</dbReference>
<dbReference type="InterPro" id="IPR027443">
    <property type="entry name" value="IPNS-like_sf"/>
</dbReference>
<dbReference type="InterPro" id="IPR050231">
    <property type="entry name" value="Iron_ascorbate_oxido_reductase"/>
</dbReference>
<dbReference type="InterPro" id="IPR005123">
    <property type="entry name" value="Oxoglu/Fe-dep_dioxygenase_dom"/>
</dbReference>
<dbReference type="PANTHER" id="PTHR47990">
    <property type="entry name" value="2-OXOGLUTARATE (2OG) AND FE(II)-DEPENDENT OXYGENASE SUPERFAMILY PROTEIN-RELATED"/>
    <property type="match status" value="1"/>
</dbReference>
<dbReference type="Pfam" id="PF03171">
    <property type="entry name" value="2OG-FeII_Oxy"/>
    <property type="match status" value="1"/>
</dbReference>
<dbReference type="Pfam" id="PF14226">
    <property type="entry name" value="DIOX_N"/>
    <property type="match status" value="1"/>
</dbReference>
<dbReference type="SUPFAM" id="SSF51197">
    <property type="entry name" value="Clavaminate synthase-like"/>
    <property type="match status" value="1"/>
</dbReference>
<dbReference type="PROSITE" id="PS51471">
    <property type="entry name" value="FE2OG_OXY"/>
    <property type="match status" value="1"/>
</dbReference>